<sequence length="357" mass="41065">MNRETFDIQPIGRFYGSNTAIRRPREIACFSYDDQHKFHLGDSSLRYYYPPQLPADLNRGFDTFQKLDDAADEHIDALLDTIAAMEKETGKRCEADIITWRGMMTKILTAPFDDMNGFEMNATCFQGTMCKQLQRQQRMPPGMASQDLMAYWGYKFETISVLDKTWDEASREEIEGRENLVVNNNAQYCSVVRTGIGRTKLVLGGEVDAIWDSKPERKEDPINWVELKTSAEIRKDWDMVKFERKLLKFWAQSFLLGVPKIVVGFRDQGGILRRLEELETANIPNRVRKSGRGTWDGNICINFAATFLEWLKSVIKEGGTWRLRKAEKSSVIEVYQVEESGTGDILSQAFLSWRSTT</sequence>
<protein>
    <recommendedName>
        <fullName evidence="6">Decapping nuclease RAI1</fullName>
        <ecNumber evidence="5">3.6.1.-</ecNumber>
    </recommendedName>
    <alternativeName>
        <fullName evidence="6">NAD-capped RNA hydrolase rai1</fullName>
        <shortName evidence="6">DeNADding enzyme rai1</shortName>
        <ecNumber evidence="1">3.6.1.-</ecNumber>
    </alternativeName>
</protein>
<proteinExistence type="inferred from homology"/>
<evidence type="ECO:0000250" key="1">
    <source>
        <dbReference type="UniProtKB" id="O13836"/>
    </source>
</evidence>
<evidence type="ECO:0000250" key="2">
    <source>
        <dbReference type="UniProtKB" id="O70348"/>
    </source>
</evidence>
<evidence type="ECO:0000250" key="3">
    <source>
        <dbReference type="UniProtKB" id="P53063"/>
    </source>
</evidence>
<evidence type="ECO:0000250" key="4">
    <source>
        <dbReference type="UniProtKB" id="Q06349"/>
    </source>
</evidence>
<evidence type="ECO:0000250" key="5">
    <source>
        <dbReference type="UniProtKB" id="Q5AAT0"/>
    </source>
</evidence>
<evidence type="ECO:0000305" key="6"/>
<comment type="function">
    <text evidence="1 2 4 5">Decapping enzyme for NAD-capped RNAs: specifically hydrolyzes the nicotinamide adenine dinucleotide (NAD) cap from a subset of RNAs by removing the entire NAD moiety from the 5'-end of an NAD-capped RNA (By similarity). The NAD-cap is present at the 5'-end of some RNAs and snoRNAs. In contrast to the canonical 5'-end N7 methylguanosine (m7G) cap, the NAD cap promotes mRNA decay (By similarity). Also acts as a non-canonical decapping enzyme that removes the entire cap structure of m7G capped or incompletely capped RNAs (By similarity). Has decapping activity toward incomplete 5'-end m7G cap mRNAs such as unmethylated 5'-end-capped RNA (cap0), while it has no activity toward 2'-O-ribose methylated m7G cap (cap1) (By similarity). Also possesses RNA 5'-pyrophosphohydrolase activity by hydrolyzing the 5'-end triphosphate to release pyrophosphates (By similarity). Stimulates exoribonuclease activity of Rat1, allowing it to degrade RNAs with stable secondary structure more effectively (By similarity).</text>
</comment>
<comment type="catalytic activity">
    <reaction evidence="1">
        <text>a 5'-end NAD(+)-phospho-ribonucleoside in mRNA + H2O = a 5'-end phospho-ribonucleoside in mRNA + NAD(+) + H(+)</text>
        <dbReference type="Rhea" id="RHEA:60880"/>
        <dbReference type="Rhea" id="RHEA-COMP:15692"/>
        <dbReference type="Rhea" id="RHEA-COMP:15698"/>
        <dbReference type="ChEBI" id="CHEBI:15377"/>
        <dbReference type="ChEBI" id="CHEBI:15378"/>
        <dbReference type="ChEBI" id="CHEBI:57540"/>
        <dbReference type="ChEBI" id="CHEBI:138282"/>
        <dbReference type="ChEBI" id="CHEBI:144029"/>
    </reaction>
    <physiologicalReaction direction="left-to-right" evidence="1">
        <dbReference type="Rhea" id="RHEA:60881"/>
    </physiologicalReaction>
</comment>
<comment type="catalytic activity">
    <reaction evidence="3">
        <text>a 5'-end (N(7)-methyl 5'-triphosphoguanosine)-ribonucleoside-ribonucleotide in mRNA + H2O = a (N(7)-methyl 5'-triphosphoguanosine)-nucleoside + a 5'-end phospho-ribonucleoside in mRNA + H(+)</text>
        <dbReference type="Rhea" id="RHEA:66928"/>
        <dbReference type="Rhea" id="RHEA-COMP:15692"/>
        <dbReference type="Rhea" id="RHEA-COMP:17313"/>
        <dbReference type="ChEBI" id="CHEBI:15377"/>
        <dbReference type="ChEBI" id="CHEBI:15378"/>
        <dbReference type="ChEBI" id="CHEBI:138282"/>
        <dbReference type="ChEBI" id="CHEBI:172876"/>
        <dbReference type="ChEBI" id="CHEBI:172877"/>
    </reaction>
    <physiologicalReaction direction="left-to-right" evidence="3">
        <dbReference type="Rhea" id="RHEA:66929"/>
    </physiologicalReaction>
</comment>
<comment type="catalytic activity">
    <reaction evidence="1">
        <text>a 5'-end triphospho-ribonucleoside in mRNA + H2O = a 5'-end phospho-ribonucleoside in mRNA + diphosphate + H(+)</text>
        <dbReference type="Rhea" id="RHEA:78683"/>
        <dbReference type="Rhea" id="RHEA-COMP:15692"/>
        <dbReference type="Rhea" id="RHEA-COMP:17164"/>
        <dbReference type="ChEBI" id="CHEBI:15377"/>
        <dbReference type="ChEBI" id="CHEBI:15378"/>
        <dbReference type="ChEBI" id="CHEBI:33019"/>
        <dbReference type="ChEBI" id="CHEBI:138282"/>
        <dbReference type="ChEBI" id="CHEBI:167618"/>
    </reaction>
    <physiologicalReaction direction="left-to-right" evidence="1">
        <dbReference type="Rhea" id="RHEA:78684"/>
    </physiologicalReaction>
</comment>
<comment type="cofactor">
    <cofactor evidence="5">
        <name>a divalent metal cation</name>
        <dbReference type="ChEBI" id="CHEBI:60240"/>
    </cofactor>
    <text evidence="5">Divalent metal cation.</text>
</comment>
<comment type="subunit">
    <text evidence="1">Interacts with rat1; the interaction is direct, stabilizes rat1 protein structure and stimulates its exoribonuclease activity (By similarity). The interaction also stimulates rai1 pyrophosphohydrolase activity, probably by recruiting it to mRNA substrates (By similarity).</text>
</comment>
<comment type="subcellular location">
    <subcellularLocation>
        <location evidence="3">Nucleus</location>
    </subcellularLocation>
</comment>
<comment type="similarity">
    <text evidence="6">Belongs to the DXO/Dom3Z family.</text>
</comment>
<keyword id="KW-0378">Hydrolase</keyword>
<keyword id="KW-0479">Metal-binding</keyword>
<keyword id="KW-0507">mRNA processing</keyword>
<keyword id="KW-0540">Nuclease</keyword>
<keyword id="KW-0547">Nucleotide-binding</keyword>
<keyword id="KW-0539">Nucleus</keyword>
<keyword id="KW-1185">Reference proteome</keyword>
<keyword id="KW-0694">RNA-binding</keyword>
<reference key="1">
    <citation type="journal article" date="2005" name="Nature">
        <title>Sequencing of Aspergillus nidulans and comparative analysis with A. fumigatus and A. oryzae.</title>
        <authorList>
            <person name="Galagan J.E."/>
            <person name="Calvo S.E."/>
            <person name="Cuomo C."/>
            <person name="Ma L.-J."/>
            <person name="Wortman J.R."/>
            <person name="Batzoglou S."/>
            <person name="Lee S.-I."/>
            <person name="Bastuerkmen M."/>
            <person name="Spevak C.C."/>
            <person name="Clutterbuck J."/>
            <person name="Kapitonov V."/>
            <person name="Jurka J."/>
            <person name="Scazzocchio C."/>
            <person name="Farman M.L."/>
            <person name="Butler J."/>
            <person name="Purcell S."/>
            <person name="Harris S."/>
            <person name="Braus G.H."/>
            <person name="Draht O."/>
            <person name="Busch S."/>
            <person name="D'Enfert C."/>
            <person name="Bouchier C."/>
            <person name="Goldman G.H."/>
            <person name="Bell-Pedersen D."/>
            <person name="Griffiths-Jones S."/>
            <person name="Doonan J.H."/>
            <person name="Yu J."/>
            <person name="Vienken K."/>
            <person name="Pain A."/>
            <person name="Freitag M."/>
            <person name="Selker E.U."/>
            <person name="Archer D.B."/>
            <person name="Penalva M.A."/>
            <person name="Oakley B.R."/>
            <person name="Momany M."/>
            <person name="Tanaka T."/>
            <person name="Kumagai T."/>
            <person name="Asai K."/>
            <person name="Machida M."/>
            <person name="Nierman W.C."/>
            <person name="Denning D.W."/>
            <person name="Caddick M.X."/>
            <person name="Hynes M."/>
            <person name="Paoletti M."/>
            <person name="Fischer R."/>
            <person name="Miller B.L."/>
            <person name="Dyer P.S."/>
            <person name="Sachs M.S."/>
            <person name="Osmani S.A."/>
            <person name="Birren B.W."/>
        </authorList>
    </citation>
    <scope>NUCLEOTIDE SEQUENCE [LARGE SCALE GENOMIC DNA]</scope>
    <source>
        <strain>FGSC A4 / ATCC 38163 / CBS 112.46 / NRRL 194 / M139</strain>
    </source>
</reference>
<reference key="2">
    <citation type="journal article" date="2009" name="Fungal Genet. Biol.">
        <title>The 2008 update of the Aspergillus nidulans genome annotation: a community effort.</title>
        <authorList>
            <person name="Wortman J.R."/>
            <person name="Gilsenan J.M."/>
            <person name="Joardar V."/>
            <person name="Deegan J."/>
            <person name="Clutterbuck J."/>
            <person name="Andersen M.R."/>
            <person name="Archer D."/>
            <person name="Bencina M."/>
            <person name="Braus G."/>
            <person name="Coutinho P."/>
            <person name="von Dohren H."/>
            <person name="Doonan J."/>
            <person name="Driessen A.J."/>
            <person name="Durek P."/>
            <person name="Espeso E."/>
            <person name="Fekete E."/>
            <person name="Flipphi M."/>
            <person name="Estrada C.G."/>
            <person name="Geysens S."/>
            <person name="Goldman G."/>
            <person name="de Groot P.W."/>
            <person name="Hansen K."/>
            <person name="Harris S.D."/>
            <person name="Heinekamp T."/>
            <person name="Helmstaedt K."/>
            <person name="Henrissat B."/>
            <person name="Hofmann G."/>
            <person name="Homan T."/>
            <person name="Horio T."/>
            <person name="Horiuchi H."/>
            <person name="James S."/>
            <person name="Jones M."/>
            <person name="Karaffa L."/>
            <person name="Karanyi Z."/>
            <person name="Kato M."/>
            <person name="Keller N."/>
            <person name="Kelly D.E."/>
            <person name="Kiel J.A."/>
            <person name="Kim J.M."/>
            <person name="van der Klei I.J."/>
            <person name="Klis F.M."/>
            <person name="Kovalchuk A."/>
            <person name="Krasevec N."/>
            <person name="Kubicek C.P."/>
            <person name="Liu B."/>
            <person name="Maccabe A."/>
            <person name="Meyer V."/>
            <person name="Mirabito P."/>
            <person name="Miskei M."/>
            <person name="Mos M."/>
            <person name="Mullins J."/>
            <person name="Nelson D.R."/>
            <person name="Nielsen J."/>
            <person name="Oakley B.R."/>
            <person name="Osmani S.A."/>
            <person name="Pakula T."/>
            <person name="Paszewski A."/>
            <person name="Paulsen I."/>
            <person name="Pilsyk S."/>
            <person name="Pocsi I."/>
            <person name="Punt P.J."/>
            <person name="Ram A.F."/>
            <person name="Ren Q."/>
            <person name="Robellet X."/>
            <person name="Robson G."/>
            <person name="Seiboth B."/>
            <person name="van Solingen P."/>
            <person name="Specht T."/>
            <person name="Sun J."/>
            <person name="Taheri-Talesh N."/>
            <person name="Takeshita N."/>
            <person name="Ussery D."/>
            <person name="vanKuyk P.A."/>
            <person name="Visser H."/>
            <person name="van de Vondervoort P.J."/>
            <person name="de Vries R.P."/>
            <person name="Walton J."/>
            <person name="Xiang X."/>
            <person name="Xiong Y."/>
            <person name="Zeng A.P."/>
            <person name="Brandt B.W."/>
            <person name="Cornell M.J."/>
            <person name="van den Hondel C.A."/>
            <person name="Visser J."/>
            <person name="Oliver S.G."/>
            <person name="Turner G."/>
        </authorList>
    </citation>
    <scope>GENOME REANNOTATION</scope>
    <source>
        <strain>FGSC A4 / ATCC 38163 / CBS 112.46 / NRRL 194 / M139</strain>
    </source>
</reference>
<organism>
    <name type="scientific">Emericella nidulans (strain FGSC A4 / ATCC 38163 / CBS 112.46 / NRRL 194 / M139)</name>
    <name type="common">Aspergillus nidulans</name>
    <dbReference type="NCBI Taxonomy" id="227321"/>
    <lineage>
        <taxon>Eukaryota</taxon>
        <taxon>Fungi</taxon>
        <taxon>Dikarya</taxon>
        <taxon>Ascomycota</taxon>
        <taxon>Pezizomycotina</taxon>
        <taxon>Eurotiomycetes</taxon>
        <taxon>Eurotiomycetidae</taxon>
        <taxon>Eurotiales</taxon>
        <taxon>Aspergillaceae</taxon>
        <taxon>Aspergillus</taxon>
        <taxon>Aspergillus subgen. Nidulantes</taxon>
    </lineage>
</organism>
<feature type="chain" id="PRO_0000249833" description="Decapping nuclease RAI1">
    <location>
        <begin position="1"/>
        <end position="357"/>
    </location>
</feature>
<feature type="binding site" evidence="1">
    <location>
        <position position="157"/>
    </location>
    <ligand>
        <name>a divalent metal cation</name>
        <dbReference type="ChEBI" id="CHEBI:60240"/>
    </ligand>
</feature>
<feature type="binding site" evidence="2">
    <location>
        <position position="189"/>
    </location>
    <ligand>
        <name>substrate</name>
    </ligand>
</feature>
<feature type="binding site" evidence="2">
    <location>
        <position position="206"/>
    </location>
    <ligand>
        <name>substrate</name>
    </ligand>
</feature>
<feature type="binding site" evidence="1">
    <location>
        <position position="208"/>
    </location>
    <ligand>
        <name>a divalent metal cation</name>
        <dbReference type="ChEBI" id="CHEBI:60240"/>
    </ligand>
</feature>
<feature type="binding site" evidence="1">
    <location>
        <position position="226"/>
    </location>
    <ligand>
        <name>a divalent metal cation</name>
        <dbReference type="ChEBI" id="CHEBI:60240"/>
    </ligand>
</feature>
<feature type="binding site" evidence="1">
    <location>
        <position position="227"/>
    </location>
    <ligand>
        <name>a divalent metal cation</name>
        <dbReference type="ChEBI" id="CHEBI:60240"/>
    </ligand>
</feature>
<feature type="binding site" evidence="2">
    <location>
        <position position="228"/>
    </location>
    <ligand>
        <name>substrate</name>
    </ligand>
</feature>
<feature type="binding site" evidence="2">
    <location>
        <position position="252"/>
    </location>
    <ligand>
        <name>substrate</name>
    </ligand>
</feature>
<name>DXO_EMENI</name>
<dbReference type="EC" id="3.6.1.-" evidence="5 1"/>
<dbReference type="EMBL" id="AACD01000109">
    <property type="protein sequence ID" value="EAA57854.1"/>
    <property type="molecule type" value="Genomic_DNA"/>
</dbReference>
<dbReference type="EMBL" id="BN001301">
    <property type="protein sequence ID" value="CBF70893.1"/>
    <property type="molecule type" value="Genomic_DNA"/>
</dbReference>
<dbReference type="RefSeq" id="XP_664118.1">
    <property type="nucleotide sequence ID" value="XM_659026.1"/>
</dbReference>
<dbReference type="SMR" id="Q5AYW6"/>
<dbReference type="FunCoup" id="Q5AYW6">
    <property type="interactions" value="619"/>
</dbReference>
<dbReference type="STRING" id="227321.Q5AYW6"/>
<dbReference type="EnsemblFungi" id="CBF70893">
    <property type="protein sequence ID" value="CBF70893"/>
    <property type="gene ID" value="ANIA_06514"/>
</dbReference>
<dbReference type="KEGG" id="ani:ANIA_06514"/>
<dbReference type="eggNOG" id="KOG1982">
    <property type="taxonomic scope" value="Eukaryota"/>
</dbReference>
<dbReference type="HOGENOM" id="CLU_024877_4_1_1"/>
<dbReference type="InParanoid" id="Q5AYW6"/>
<dbReference type="OMA" id="VVTWRGH"/>
<dbReference type="OrthoDB" id="5853397at2759"/>
<dbReference type="Proteomes" id="UP000000560">
    <property type="component" value="Chromosome I"/>
</dbReference>
<dbReference type="GO" id="GO:0005829">
    <property type="term" value="C:cytosol"/>
    <property type="evidence" value="ECO:0000318"/>
    <property type="project" value="GO_Central"/>
</dbReference>
<dbReference type="GO" id="GO:0090730">
    <property type="term" value="C:Las1 complex"/>
    <property type="evidence" value="ECO:0007669"/>
    <property type="project" value="EnsemblFungi"/>
</dbReference>
<dbReference type="GO" id="GO:0005634">
    <property type="term" value="C:nucleus"/>
    <property type="evidence" value="ECO:0000318"/>
    <property type="project" value="GO_Central"/>
</dbReference>
<dbReference type="GO" id="GO:0110103">
    <property type="term" value="C:RNA polymerase II termination complex"/>
    <property type="evidence" value="ECO:0007669"/>
    <property type="project" value="EnsemblFungi"/>
</dbReference>
<dbReference type="GO" id="GO:0140432">
    <property type="term" value="F:5'-hydroxyl dinucleotide hydrolase activity"/>
    <property type="evidence" value="ECO:0007669"/>
    <property type="project" value="EnsemblFungi"/>
</dbReference>
<dbReference type="GO" id="GO:0030234">
    <property type="term" value="F:enzyme regulator activity"/>
    <property type="evidence" value="ECO:0007669"/>
    <property type="project" value="EnsemblFungi"/>
</dbReference>
<dbReference type="GO" id="GO:0019003">
    <property type="term" value="F:GDP binding"/>
    <property type="evidence" value="ECO:0007669"/>
    <property type="project" value="EnsemblFungi"/>
</dbReference>
<dbReference type="GO" id="GO:0046872">
    <property type="term" value="F:metal ion binding"/>
    <property type="evidence" value="ECO:0007669"/>
    <property type="project" value="UniProtKB-KW"/>
</dbReference>
<dbReference type="GO" id="GO:0034353">
    <property type="term" value="F:mRNA 5'-diphosphatase activity"/>
    <property type="evidence" value="ECO:0000318"/>
    <property type="project" value="GO_Central"/>
</dbReference>
<dbReference type="GO" id="GO:1990174">
    <property type="term" value="F:phosphodiesterase decapping endonuclease activity"/>
    <property type="evidence" value="ECO:0007669"/>
    <property type="project" value="EnsemblFungi"/>
</dbReference>
<dbReference type="GO" id="GO:0003723">
    <property type="term" value="F:RNA binding"/>
    <property type="evidence" value="ECO:0007669"/>
    <property type="project" value="UniProtKB-KW"/>
</dbReference>
<dbReference type="GO" id="GO:0110152">
    <property type="term" value="F:RNA NAD+-cap (NAD+-forming) hydrolase activity"/>
    <property type="evidence" value="ECO:0007669"/>
    <property type="project" value="EnsemblFungi"/>
</dbReference>
<dbReference type="GO" id="GO:0000448">
    <property type="term" value="P:cleavage in ITS2 between 5.8S rRNA and LSU-rRNA of tricistronic rRNA transcript (SSU-rRNA, 5.8S rRNA, LSU-rRNA)"/>
    <property type="evidence" value="ECO:0007669"/>
    <property type="project" value="EnsemblFungi"/>
</dbReference>
<dbReference type="GO" id="GO:0031087">
    <property type="term" value="P:deadenylation-independent decapping of nuclear-transcribed mRNA"/>
    <property type="evidence" value="ECO:0007669"/>
    <property type="project" value="EnsemblFungi"/>
</dbReference>
<dbReference type="GO" id="GO:0006397">
    <property type="term" value="P:mRNA processing"/>
    <property type="evidence" value="ECO:0007669"/>
    <property type="project" value="UniProtKB-KW"/>
</dbReference>
<dbReference type="GO" id="GO:0110155">
    <property type="term" value="P:NAD-cap decapping"/>
    <property type="evidence" value="ECO:0000318"/>
    <property type="project" value="GO_Central"/>
</dbReference>
<dbReference type="GO" id="GO:0071035">
    <property type="term" value="P:nuclear polyadenylation-dependent rRNA catabolic process"/>
    <property type="evidence" value="ECO:0007669"/>
    <property type="project" value="EnsemblFungi"/>
</dbReference>
<dbReference type="GO" id="GO:0000956">
    <property type="term" value="P:nuclear-transcribed mRNA catabolic process"/>
    <property type="evidence" value="ECO:0000318"/>
    <property type="project" value="GO_Central"/>
</dbReference>
<dbReference type="GO" id="GO:1904595">
    <property type="term" value="P:positive regulation of termination of RNA polymerase II transcription"/>
    <property type="evidence" value="ECO:0007669"/>
    <property type="project" value="EnsemblFungi"/>
</dbReference>
<dbReference type="GO" id="GO:0030846">
    <property type="term" value="P:termination of RNA polymerase II transcription, poly(A)-coupled"/>
    <property type="evidence" value="ECO:0007669"/>
    <property type="project" value="EnsemblFungi"/>
</dbReference>
<dbReference type="InterPro" id="IPR013961">
    <property type="entry name" value="RAI1"/>
</dbReference>
<dbReference type="InterPro" id="IPR039039">
    <property type="entry name" value="RAI1-like_fam"/>
</dbReference>
<dbReference type="PANTHER" id="PTHR12395:SF9">
    <property type="entry name" value="DECAPPING AND EXORIBONUCLEASE PROTEIN"/>
    <property type="match status" value="1"/>
</dbReference>
<dbReference type="PANTHER" id="PTHR12395">
    <property type="entry name" value="DOM-3 RELATED"/>
    <property type="match status" value="1"/>
</dbReference>
<dbReference type="Pfam" id="PF08652">
    <property type="entry name" value="RAI1"/>
    <property type="match status" value="1"/>
</dbReference>
<gene>
    <name type="primary">rai1</name>
    <name type="ORF">AN6514</name>
</gene>
<accession>Q5AYW6</accession>
<accession>C8V0J5</accession>